<dbReference type="EMBL" id="AY243571">
    <property type="protein sequence ID" value="AAP22988.1"/>
    <property type="molecule type" value="mRNA"/>
</dbReference>
<dbReference type="SMR" id="Q6JZK2"/>
<dbReference type="VEuPathDB" id="TriTrypDB:BCY84_16129"/>
<dbReference type="VEuPathDB" id="TriTrypDB:C3747_7g1097c"/>
<dbReference type="VEuPathDB" id="TriTrypDB:C4B63_13g978c"/>
<dbReference type="VEuPathDB" id="TriTrypDB:TcBrA4_0003040"/>
<dbReference type="VEuPathDB" id="TriTrypDB:TcCLB.503891.54"/>
<dbReference type="VEuPathDB" id="TriTrypDB:TcCLB.510289.6"/>
<dbReference type="VEuPathDB" id="TriTrypDB:TCDM_13837"/>
<dbReference type="VEuPathDB" id="TriTrypDB:TcYC6_0080420"/>
<dbReference type="GO" id="GO:0031429">
    <property type="term" value="C:box H/ACA snoRNP complex"/>
    <property type="evidence" value="ECO:0007669"/>
    <property type="project" value="TreeGrafter"/>
</dbReference>
<dbReference type="GO" id="GO:0030515">
    <property type="term" value="F:snoRNA binding"/>
    <property type="evidence" value="ECO:0007669"/>
    <property type="project" value="InterPro"/>
</dbReference>
<dbReference type="GO" id="GO:0070034">
    <property type="term" value="F:telomerase RNA binding"/>
    <property type="evidence" value="ECO:0007669"/>
    <property type="project" value="TreeGrafter"/>
</dbReference>
<dbReference type="GO" id="GO:1904874">
    <property type="term" value="P:positive regulation of telomerase RNA localization to Cajal body"/>
    <property type="evidence" value="ECO:0007669"/>
    <property type="project" value="TreeGrafter"/>
</dbReference>
<dbReference type="GO" id="GO:0031118">
    <property type="term" value="P:rRNA pseudouridine synthesis"/>
    <property type="evidence" value="ECO:0007669"/>
    <property type="project" value="TreeGrafter"/>
</dbReference>
<dbReference type="GO" id="GO:0031120">
    <property type="term" value="P:snRNA pseudouridine synthesis"/>
    <property type="evidence" value="ECO:0007669"/>
    <property type="project" value="TreeGrafter"/>
</dbReference>
<dbReference type="FunFam" id="2.20.28.40:FF:000002">
    <property type="entry name" value="H/ACA ribonucleoprotein complex subunit 3"/>
    <property type="match status" value="1"/>
</dbReference>
<dbReference type="Gene3D" id="2.20.28.40">
    <property type="entry name" value="H/ACA ribonucleoprotein complex, subunit Nop10"/>
    <property type="match status" value="1"/>
</dbReference>
<dbReference type="InterPro" id="IPR007264">
    <property type="entry name" value="H/ACA_rnp_Nop10"/>
</dbReference>
<dbReference type="InterPro" id="IPR036756">
    <property type="entry name" value="H/ACA_rnp_Nop10_sf"/>
</dbReference>
<dbReference type="PANTHER" id="PTHR13305:SF0">
    <property type="entry name" value="H_ACA RIBONUCLEOPROTEIN COMPLEX SUBUNIT 3"/>
    <property type="match status" value="1"/>
</dbReference>
<dbReference type="PANTHER" id="PTHR13305">
    <property type="entry name" value="RIBOSOME BIOGENESIS PROTEIN NOP10"/>
    <property type="match status" value="1"/>
</dbReference>
<dbReference type="Pfam" id="PF04135">
    <property type="entry name" value="Nop10p"/>
    <property type="match status" value="1"/>
</dbReference>
<dbReference type="SUPFAM" id="SSF144210">
    <property type="entry name" value="Nop10-like SnoRNP"/>
    <property type="match status" value="1"/>
</dbReference>
<name>NOP10_TRYCR</name>
<organism>
    <name type="scientific">Trypanosoma cruzi</name>
    <dbReference type="NCBI Taxonomy" id="5693"/>
    <lineage>
        <taxon>Eukaryota</taxon>
        <taxon>Discoba</taxon>
        <taxon>Euglenozoa</taxon>
        <taxon>Kinetoplastea</taxon>
        <taxon>Metakinetoplastina</taxon>
        <taxon>Trypanosomatida</taxon>
        <taxon>Trypanosomatidae</taxon>
        <taxon>Trypanosoma</taxon>
        <taxon>Schizotrypanum</taxon>
    </lineage>
</organism>
<proteinExistence type="inferred from homology"/>
<reference key="1">
    <citation type="submission" date="2003-02" db="EMBL/GenBank/DDBJ databases">
        <title>Cloning and characterization of the gene encoding the putative Nop10 protein in Trypanosoma cruzi.</title>
        <authorList>
            <person name="Vancini T.R.G."/>
            <person name="Picchi G.F.A."/>
            <person name="Krieger M.A."/>
            <person name="Goldenberg S."/>
            <person name="Fragoso S.P."/>
        </authorList>
    </citation>
    <scope>NUCLEOTIDE SEQUENCE [MRNA]</scope>
</reference>
<keyword id="KW-0539">Nucleus</keyword>
<keyword id="KW-0687">Ribonucleoprotein</keyword>
<keyword id="KW-0690">Ribosome biogenesis</keyword>
<keyword id="KW-0698">rRNA processing</keyword>
<comment type="function">
    <text evidence="1">Required for ribosome biogenesis. Part of a complex which catalyzes pseudouridylation of rRNA. This involves the isomerization of uridine such that the ribose is subsequently attached to C5, instead of the normal N1. Pseudouridine ('psi') residues may serve to stabilize the conformation of rRNAs (By similarity).</text>
</comment>
<comment type="subunit">
    <text evidence="1">Component of the small nucleolar ribonucleoprotein particles containing H/ACA-type snoRNAs (H/ACA snoRNPs).</text>
</comment>
<comment type="subcellular location">
    <subcellularLocation>
        <location evidence="1">Nucleus</location>
        <location evidence="1">Nucleolus</location>
    </subcellularLocation>
</comment>
<comment type="similarity">
    <text evidence="3">Belongs to the NOP10 family.</text>
</comment>
<sequence length="63" mass="7490">MHLQVYIVNGKRQYTLKKMDPEGKPTLSAHPARFSPDDKYSRHRITIKRRFKALKSEKRPKPL</sequence>
<protein>
    <recommendedName>
        <fullName>H/ACA ribonucleoprotein complex subunit 3-like protein</fullName>
    </recommendedName>
    <alternativeName>
        <fullName>Nucleolar protein 10</fullName>
    </alternativeName>
    <alternativeName>
        <fullName>Ribosome biogenesis protein Nop10</fullName>
    </alternativeName>
</protein>
<evidence type="ECO:0000250" key="1"/>
<evidence type="ECO:0000256" key="2">
    <source>
        <dbReference type="SAM" id="MobiDB-lite"/>
    </source>
</evidence>
<evidence type="ECO:0000305" key="3"/>
<accession>Q6JZK2</accession>
<feature type="chain" id="PRO_0000149006" description="H/ACA ribonucleoprotein complex subunit 3-like protein">
    <location>
        <begin position="1"/>
        <end position="63"/>
    </location>
</feature>
<feature type="region of interest" description="Disordered" evidence="2">
    <location>
        <begin position="18"/>
        <end position="40"/>
    </location>
</feature>